<feature type="chain" id="PRO_0000283857" description="Protein non-structural 7b">
    <location>
        <begin position="1"/>
        <end position="44"/>
    </location>
</feature>
<feature type="transmembrane region" description="Helical" evidence="1">
    <location>
        <begin position="9"/>
        <end position="29"/>
    </location>
</feature>
<sequence>MNELTLIDFYLCFLAFLLFLVLIMLIIFWFSLEIQDLEEPCTKV</sequence>
<organismHost>
    <name type="scientific">Homo sapiens</name>
    <name type="common">Human</name>
    <dbReference type="NCBI Taxonomy" id="9606"/>
</organismHost>
<organismHost>
    <name type="scientific">Paguma larvata</name>
    <name type="common">Masked palm civet</name>
    <dbReference type="NCBI Taxonomy" id="9675"/>
</organismHost>
<keyword id="KW-1043">Host membrane</keyword>
<keyword id="KW-0472">Membrane</keyword>
<keyword id="KW-1185">Reference proteome</keyword>
<keyword id="KW-0812">Transmembrane</keyword>
<keyword id="KW-1133">Transmembrane helix</keyword>
<reference key="1">
    <citation type="journal article" date="2003" name="Science">
        <title>Characterization of a novel coronavirus associated with severe acute respiratory syndrome.</title>
        <authorList>
            <person name="Rota P.A."/>
            <person name="Oberste M.S."/>
            <person name="Monroe S.S."/>
            <person name="Nix W.A."/>
            <person name="Campagnoli R."/>
            <person name="Icenogle J.P."/>
            <person name="Penaranda S."/>
            <person name="Bankamp B."/>
            <person name="Maher K."/>
            <person name="Chen M.-H."/>
            <person name="Tong S."/>
            <person name="Tamin A."/>
            <person name="Lowe L."/>
            <person name="Frace M."/>
            <person name="DeRisi J.L."/>
            <person name="Chen Q."/>
            <person name="Wang D."/>
            <person name="Erdman D.D."/>
            <person name="Peret T.C.T."/>
            <person name="Burns C."/>
            <person name="Ksiazek T.G."/>
            <person name="Rollin P.E."/>
            <person name="Sanchez A."/>
            <person name="Liffick S."/>
            <person name="Holloway B."/>
            <person name="Limor J."/>
            <person name="McCaustland K."/>
            <person name="Olsen-Rasmussen M."/>
            <person name="Fouchier R."/>
            <person name="Guenther S."/>
            <person name="Osterhaus A.D.M.E."/>
            <person name="Drosten C."/>
            <person name="Pallansch M.A."/>
            <person name="Anderson L.J."/>
            <person name="Bellini W.J."/>
        </authorList>
    </citation>
    <scope>NUCLEOTIDE SEQUENCE [GENOMIC RNA]</scope>
    <source>
        <strain>Isolate Urbani</strain>
    </source>
</reference>
<reference key="2">
    <citation type="journal article" date="2003" name="Science">
        <title>The genome sequence of the SARS-associated coronavirus.</title>
        <authorList>
            <person name="Marra M.A."/>
            <person name="Jones S.J.M."/>
            <person name="Astell C.R."/>
            <person name="Holt R.A."/>
            <person name="Brooks-Wilson A."/>
            <person name="Butterfield Y.S.N."/>
            <person name="Khattra J."/>
            <person name="Asano J.K."/>
            <person name="Barber S.A."/>
            <person name="Chan S.Y."/>
            <person name="Cloutier A."/>
            <person name="Coughlin S.M."/>
            <person name="Freeman D."/>
            <person name="Girn N."/>
            <person name="Griffith O.L."/>
            <person name="Leach S.R."/>
            <person name="Mayo M."/>
            <person name="McDonald H."/>
            <person name="Montgomery S.B."/>
            <person name="Pandoh P.K."/>
            <person name="Petrescu A.S."/>
            <person name="Robertson A.G."/>
            <person name="Schein J.E."/>
            <person name="Siddiqui A."/>
            <person name="Smailus D.E."/>
            <person name="Stott J.M."/>
            <person name="Yang G.S."/>
            <person name="Plummer F."/>
            <person name="Andonov A."/>
            <person name="Artsob H."/>
            <person name="Bastien N."/>
            <person name="Bernard K."/>
            <person name="Booth T.F."/>
            <person name="Bowness D."/>
            <person name="Czub M."/>
            <person name="Drebot M."/>
            <person name="Fernando L."/>
            <person name="Flick R."/>
            <person name="Garbutt M."/>
            <person name="Gray M."/>
            <person name="Grolla A."/>
            <person name="Jones S."/>
            <person name="Feldmann H."/>
            <person name="Meyers A."/>
            <person name="Kabani A."/>
            <person name="Li Y."/>
            <person name="Normand S."/>
            <person name="Stroher U."/>
            <person name="Tipples G.A."/>
            <person name="Tyler S."/>
            <person name="Vogrig R."/>
            <person name="Ward D."/>
            <person name="Watson B."/>
            <person name="Brunham R.C."/>
            <person name="Krajden M."/>
            <person name="Petric M."/>
            <person name="Skowronski D.M."/>
            <person name="Upton C."/>
            <person name="Roper R.L."/>
        </authorList>
    </citation>
    <scope>NUCLEOTIDE SEQUENCE [GENOMIC RNA]</scope>
    <source>
        <strain>Isolate Tor2</strain>
    </source>
</reference>
<reference key="3">
    <citation type="journal article" date="2003" name="J. Gen. Virol.">
        <title>Mechanisms and enzymes involved in SARS coronavirus genome expression.</title>
        <authorList>
            <person name="Thiel V."/>
            <person name="Ivanov K.A."/>
            <person name="Putics A."/>
            <person name="Hertzig T."/>
            <person name="Schelle B."/>
            <person name="Bayer S."/>
            <person name="Weissbrich B."/>
            <person name="Snijder E.J."/>
            <person name="Rabenau H."/>
            <person name="Doerr H.W."/>
            <person name="Gorbalenya A.E."/>
            <person name="Ziebuhr J."/>
        </authorList>
    </citation>
    <scope>NUCLEOTIDE SEQUENCE [GENOMIC RNA]</scope>
    <source>
        <strain>Isolate Frankfurt 1</strain>
    </source>
</reference>
<reference key="4">
    <citation type="journal article" date="2006" name="Adv. Exp. Med. Biol.">
        <title>Structure, expression, and intracellular localization of the SARS-CoV accessory proteins 7a and 7b.</title>
        <authorList>
            <person name="Pekosz A."/>
            <person name="Schaecher S.R."/>
            <person name="Diamond M.S."/>
            <person name="Fremont D.H."/>
            <person name="Sims A.C."/>
            <person name="Baric R.S."/>
        </authorList>
    </citation>
    <scope>SUBCELLULAR LOCATION</scope>
</reference>
<accession>Q7TFA1</accession>
<accession>Q7TLC9</accession>
<comment type="interaction">
    <interactant intactId="EBI-25492846">
        <id>Q7TFA1</id>
    </interactant>
    <interactant intactId="EBI-25487741">
        <id>P59637</id>
        <label>E</label>
    </interactant>
    <organismsDiffer>false</organismsDiffer>
    <experiments>2</experiments>
</comment>
<comment type="interaction">
    <interactant intactId="EBI-25492846">
        <id>Q7TFA1</id>
    </interactant>
    <interactant intactId="EBI-25493595">
        <id>Q19QW5</id>
        <label>ORF6</label>
    </interactant>
    <organismsDiffer>false</organismsDiffer>
    <experiments>2</experiments>
</comment>
<comment type="interaction">
    <interactant intactId="EBI-25492846">
        <id>Q7TFA1</id>
    </interactant>
    <interactant intactId="EBI-995373">
        <id>Q7Z434</id>
        <label>MAVS</label>
    </interactant>
    <organismsDiffer>true</organismsDiffer>
    <experiments>2</experiments>
</comment>
<comment type="subcellular location">
    <subcellularLocation>
        <location evidence="2">Host membrane</location>
        <topology evidence="2">Single-pass membrane protein</topology>
    </subcellularLocation>
</comment>
<organism>
    <name type="scientific">Severe acute respiratory syndrome coronavirus</name>
    <name type="common">SARS-CoV</name>
    <dbReference type="NCBI Taxonomy" id="694009"/>
    <lineage>
        <taxon>Viruses</taxon>
        <taxon>Riboviria</taxon>
        <taxon>Orthornavirae</taxon>
        <taxon>Pisuviricota</taxon>
        <taxon>Pisoniviricetes</taxon>
        <taxon>Nidovirales</taxon>
        <taxon>Cornidovirineae</taxon>
        <taxon>Coronaviridae</taxon>
        <taxon>Orthocoronavirinae</taxon>
        <taxon>Betacoronavirus</taxon>
        <taxon>Sarbecovirus</taxon>
    </lineage>
</organism>
<name>NS7B_SARS</name>
<protein>
    <recommendedName>
        <fullName>Protein non-structural 7b</fullName>
        <shortName>ns7b</shortName>
    </recommendedName>
    <alternativeName>
        <fullName>Accessory protein 7b</fullName>
    </alternativeName>
</protein>
<dbReference type="EMBL" id="AY278741">
    <property type="status" value="NOT_ANNOTATED_CDS"/>
    <property type="molecule type" value="Genomic_RNA"/>
</dbReference>
<dbReference type="EMBL" id="AY274119">
    <property type="protein sequence ID" value="AAP41044.1"/>
    <property type="molecule type" value="Genomic_RNA"/>
</dbReference>
<dbReference type="EMBL" id="AY291315">
    <property type="protein sequence ID" value="AAP33704.1"/>
    <property type="molecule type" value="Genomic_RNA"/>
</dbReference>
<dbReference type="SMR" id="Q7TFA1"/>
<dbReference type="BioGRID" id="4383921">
    <property type="interactions" value="265"/>
</dbReference>
<dbReference type="IntAct" id="Q7TFA1">
    <property type="interactions" value="255"/>
</dbReference>
<dbReference type="SIGNOR" id="Q7TFA1"/>
<dbReference type="Proteomes" id="UP000000354">
    <property type="component" value="Segment"/>
</dbReference>
<dbReference type="Proteomes" id="UP000137377">
    <property type="component" value="Genome"/>
</dbReference>
<dbReference type="Proteomes" id="UP000180358">
    <property type="component" value="Segment"/>
</dbReference>
<dbReference type="GO" id="GO:0033644">
    <property type="term" value="C:host cell membrane"/>
    <property type="evidence" value="ECO:0007669"/>
    <property type="project" value="UniProtKB-SubCell"/>
</dbReference>
<dbReference type="GO" id="GO:0016020">
    <property type="term" value="C:membrane"/>
    <property type="evidence" value="ECO:0007669"/>
    <property type="project" value="UniProtKB-KW"/>
</dbReference>
<dbReference type="CDD" id="cd21635">
    <property type="entry name" value="ORF7b_SARS-CoV-like"/>
    <property type="match status" value="1"/>
</dbReference>
<dbReference type="InterPro" id="IPR021532">
    <property type="entry name" value="NS7B_bCoV"/>
</dbReference>
<dbReference type="InterPro" id="IPR044394">
    <property type="entry name" value="ORF7b_SARS-CoV-like"/>
</dbReference>
<dbReference type="Pfam" id="PF11395">
    <property type="entry name" value="bCoV_NS7B"/>
    <property type="match status" value="1"/>
</dbReference>
<proteinExistence type="evidence at protein level"/>
<evidence type="ECO:0000255" key="1"/>
<evidence type="ECO:0000305" key="2"/>
<gene>
    <name type="ORF">7b</name>
</gene>